<accession>B3EB83</accession>
<name>SYH_TRIL1</name>
<evidence type="ECO:0000255" key="1">
    <source>
        <dbReference type="HAMAP-Rule" id="MF_00127"/>
    </source>
</evidence>
<reference key="1">
    <citation type="submission" date="2008-05" db="EMBL/GenBank/DDBJ databases">
        <title>Complete sequence of chromosome of Geobacter lovleyi SZ.</title>
        <authorList>
            <consortium name="US DOE Joint Genome Institute"/>
            <person name="Lucas S."/>
            <person name="Copeland A."/>
            <person name="Lapidus A."/>
            <person name="Glavina del Rio T."/>
            <person name="Dalin E."/>
            <person name="Tice H."/>
            <person name="Bruce D."/>
            <person name="Goodwin L."/>
            <person name="Pitluck S."/>
            <person name="Chertkov O."/>
            <person name="Meincke L."/>
            <person name="Brettin T."/>
            <person name="Detter J.C."/>
            <person name="Han C."/>
            <person name="Tapia R."/>
            <person name="Kuske C.R."/>
            <person name="Schmutz J."/>
            <person name="Larimer F."/>
            <person name="Land M."/>
            <person name="Hauser L."/>
            <person name="Kyrpides N."/>
            <person name="Mikhailova N."/>
            <person name="Sung Y."/>
            <person name="Fletcher K.E."/>
            <person name="Ritalahti K.M."/>
            <person name="Loeffler F.E."/>
            <person name="Richardson P."/>
        </authorList>
    </citation>
    <scope>NUCLEOTIDE SEQUENCE [LARGE SCALE GENOMIC DNA]</scope>
    <source>
        <strain>ATCC BAA-1151 / DSM 17278 / SZ</strain>
    </source>
</reference>
<organism>
    <name type="scientific">Trichlorobacter lovleyi (strain ATCC BAA-1151 / DSM 17278 / SZ)</name>
    <name type="common">Geobacter lovleyi</name>
    <dbReference type="NCBI Taxonomy" id="398767"/>
    <lineage>
        <taxon>Bacteria</taxon>
        <taxon>Pseudomonadati</taxon>
        <taxon>Thermodesulfobacteriota</taxon>
        <taxon>Desulfuromonadia</taxon>
        <taxon>Geobacterales</taxon>
        <taxon>Geobacteraceae</taxon>
        <taxon>Trichlorobacter</taxon>
    </lineage>
</organism>
<comment type="catalytic activity">
    <reaction evidence="1">
        <text>tRNA(His) + L-histidine + ATP = L-histidyl-tRNA(His) + AMP + diphosphate + H(+)</text>
        <dbReference type="Rhea" id="RHEA:17313"/>
        <dbReference type="Rhea" id="RHEA-COMP:9665"/>
        <dbReference type="Rhea" id="RHEA-COMP:9689"/>
        <dbReference type="ChEBI" id="CHEBI:15378"/>
        <dbReference type="ChEBI" id="CHEBI:30616"/>
        <dbReference type="ChEBI" id="CHEBI:33019"/>
        <dbReference type="ChEBI" id="CHEBI:57595"/>
        <dbReference type="ChEBI" id="CHEBI:78442"/>
        <dbReference type="ChEBI" id="CHEBI:78527"/>
        <dbReference type="ChEBI" id="CHEBI:456215"/>
        <dbReference type="EC" id="6.1.1.21"/>
    </reaction>
</comment>
<comment type="subunit">
    <text evidence="1">Homodimer.</text>
</comment>
<comment type="subcellular location">
    <subcellularLocation>
        <location evidence="1">Cytoplasm</location>
    </subcellularLocation>
</comment>
<comment type="similarity">
    <text evidence="1">Belongs to the class-II aminoacyl-tRNA synthetase family.</text>
</comment>
<dbReference type="EC" id="6.1.1.21" evidence="1"/>
<dbReference type="EMBL" id="CP001089">
    <property type="protein sequence ID" value="ACD95477.1"/>
    <property type="molecule type" value="Genomic_DNA"/>
</dbReference>
<dbReference type="RefSeq" id="WP_012469817.1">
    <property type="nucleotide sequence ID" value="NC_010814.1"/>
</dbReference>
<dbReference type="SMR" id="B3EB83"/>
<dbReference type="STRING" id="398767.Glov_1761"/>
<dbReference type="KEGG" id="glo:Glov_1761"/>
<dbReference type="eggNOG" id="COG0124">
    <property type="taxonomic scope" value="Bacteria"/>
</dbReference>
<dbReference type="HOGENOM" id="CLU_025113_1_1_7"/>
<dbReference type="OrthoDB" id="9800814at2"/>
<dbReference type="Proteomes" id="UP000002420">
    <property type="component" value="Chromosome"/>
</dbReference>
<dbReference type="GO" id="GO:0005737">
    <property type="term" value="C:cytoplasm"/>
    <property type="evidence" value="ECO:0007669"/>
    <property type="project" value="UniProtKB-SubCell"/>
</dbReference>
<dbReference type="GO" id="GO:0005524">
    <property type="term" value="F:ATP binding"/>
    <property type="evidence" value="ECO:0007669"/>
    <property type="project" value="UniProtKB-UniRule"/>
</dbReference>
<dbReference type="GO" id="GO:0004821">
    <property type="term" value="F:histidine-tRNA ligase activity"/>
    <property type="evidence" value="ECO:0007669"/>
    <property type="project" value="UniProtKB-UniRule"/>
</dbReference>
<dbReference type="GO" id="GO:0006427">
    <property type="term" value="P:histidyl-tRNA aminoacylation"/>
    <property type="evidence" value="ECO:0007669"/>
    <property type="project" value="UniProtKB-UniRule"/>
</dbReference>
<dbReference type="CDD" id="cd00773">
    <property type="entry name" value="HisRS-like_core"/>
    <property type="match status" value="1"/>
</dbReference>
<dbReference type="CDD" id="cd00859">
    <property type="entry name" value="HisRS_anticodon"/>
    <property type="match status" value="1"/>
</dbReference>
<dbReference type="FunFam" id="3.30.930.10:FF:000005">
    <property type="entry name" value="Histidine--tRNA ligase"/>
    <property type="match status" value="1"/>
</dbReference>
<dbReference type="Gene3D" id="3.40.50.800">
    <property type="entry name" value="Anticodon-binding domain"/>
    <property type="match status" value="1"/>
</dbReference>
<dbReference type="Gene3D" id="3.30.930.10">
    <property type="entry name" value="Bira Bifunctional Protein, Domain 2"/>
    <property type="match status" value="1"/>
</dbReference>
<dbReference type="HAMAP" id="MF_00127">
    <property type="entry name" value="His_tRNA_synth"/>
    <property type="match status" value="1"/>
</dbReference>
<dbReference type="InterPro" id="IPR006195">
    <property type="entry name" value="aa-tRNA-synth_II"/>
</dbReference>
<dbReference type="InterPro" id="IPR045864">
    <property type="entry name" value="aa-tRNA-synth_II/BPL/LPL"/>
</dbReference>
<dbReference type="InterPro" id="IPR004154">
    <property type="entry name" value="Anticodon-bd"/>
</dbReference>
<dbReference type="InterPro" id="IPR036621">
    <property type="entry name" value="Anticodon-bd_dom_sf"/>
</dbReference>
<dbReference type="InterPro" id="IPR015807">
    <property type="entry name" value="His-tRNA-ligase"/>
</dbReference>
<dbReference type="InterPro" id="IPR041715">
    <property type="entry name" value="HisRS-like_core"/>
</dbReference>
<dbReference type="InterPro" id="IPR004516">
    <property type="entry name" value="HisRS/HisZ"/>
</dbReference>
<dbReference type="InterPro" id="IPR033656">
    <property type="entry name" value="HisRS_anticodon"/>
</dbReference>
<dbReference type="NCBIfam" id="TIGR00442">
    <property type="entry name" value="hisS"/>
    <property type="match status" value="1"/>
</dbReference>
<dbReference type="PANTHER" id="PTHR43707:SF1">
    <property type="entry name" value="HISTIDINE--TRNA LIGASE, MITOCHONDRIAL-RELATED"/>
    <property type="match status" value="1"/>
</dbReference>
<dbReference type="PANTHER" id="PTHR43707">
    <property type="entry name" value="HISTIDYL-TRNA SYNTHETASE"/>
    <property type="match status" value="1"/>
</dbReference>
<dbReference type="Pfam" id="PF03129">
    <property type="entry name" value="HGTP_anticodon"/>
    <property type="match status" value="1"/>
</dbReference>
<dbReference type="Pfam" id="PF13393">
    <property type="entry name" value="tRNA-synt_His"/>
    <property type="match status" value="1"/>
</dbReference>
<dbReference type="PIRSF" id="PIRSF001549">
    <property type="entry name" value="His-tRNA_synth"/>
    <property type="match status" value="1"/>
</dbReference>
<dbReference type="SUPFAM" id="SSF52954">
    <property type="entry name" value="Class II aaRS ABD-related"/>
    <property type="match status" value="1"/>
</dbReference>
<dbReference type="SUPFAM" id="SSF55681">
    <property type="entry name" value="Class II aaRS and biotin synthetases"/>
    <property type="match status" value="1"/>
</dbReference>
<dbReference type="PROSITE" id="PS50862">
    <property type="entry name" value="AA_TRNA_LIGASE_II"/>
    <property type="match status" value="1"/>
</dbReference>
<keyword id="KW-0030">Aminoacyl-tRNA synthetase</keyword>
<keyword id="KW-0067">ATP-binding</keyword>
<keyword id="KW-0963">Cytoplasm</keyword>
<keyword id="KW-0436">Ligase</keyword>
<keyword id="KW-0547">Nucleotide-binding</keyword>
<keyword id="KW-0648">Protein biosynthesis</keyword>
<keyword id="KW-1185">Reference proteome</keyword>
<sequence>MSITGIKGFNDLLPAESGLWQFIEQTARQVFARYGFNEIRVPIVEKTELFCRSIGDTTDIVEKEMYTFMDKGGSSLTLRPEGTASVMRALIEHKLYALDSINKLYYMGPMFRHERPQKGRYRQFHQIGAEVTGAADPLIDAQVLLMVSRLFQEFGLTEPRLQINSLGCPACRPAYRQALVAFLAERQEALCEDCRRRQGTNPLRALDCKVPGCIEATQGAPAMVEHLCNECDQHFSMVQNYLTAAEVPFSLNPRMVRGLDYYTRTTFELVTGLLGAQSAVAAGGRYDGLVEQLGGPAVPGIGFALGVERVALLLGDRSFEKTPDLFIAVMGDAARTAGFRLMAALQDQGFWVETDCEGKSLKSQMRRADKLKSRYSIVLGDTELVAGSGTLKRMADGNQQPVHLEAATIAAAITGGGQT</sequence>
<gene>
    <name evidence="1" type="primary">hisS</name>
    <name type="ordered locus">Glov_1761</name>
</gene>
<proteinExistence type="inferred from homology"/>
<protein>
    <recommendedName>
        <fullName evidence="1">Histidine--tRNA ligase</fullName>
        <ecNumber evidence="1">6.1.1.21</ecNumber>
    </recommendedName>
    <alternativeName>
        <fullName evidence="1">Histidyl-tRNA synthetase</fullName>
        <shortName evidence="1">HisRS</shortName>
    </alternativeName>
</protein>
<feature type="chain" id="PRO_1000203137" description="Histidine--tRNA ligase">
    <location>
        <begin position="1"/>
        <end position="419"/>
    </location>
</feature>